<sequence length="314" mass="35398">MEDFHHVTVLLKEAVAGLAIKPTGVYVDCTLGGGGHSQRILEQLTTGHLYAFDQDQTAITYNEEHLKTYLDAGKLTFIKSNFRQIQTELTERGITQVDGILYDLGVSSPQFDEADRGFSYQHDAPLDMRMDQSQKLSAWIVVNEWSFNDLLRIFHRYGEEKFAKPIARAIERHREQAPIDTTGQLVEIIKEGIPAAARRHGGHPAKKVFQAIRIAVNDELGALEDSLEQAVSLLDVNGRISVITFQSLEDRLVKTMFREQSSLPELPHGIPVIPDNLQPDFKLVNHKPILPSEEELAVNHRAHSAKLRILEKIK</sequence>
<proteinExistence type="inferred from homology"/>
<protein>
    <recommendedName>
        <fullName evidence="1">Ribosomal RNA small subunit methyltransferase H</fullName>
        <ecNumber evidence="1">2.1.1.199</ecNumber>
    </recommendedName>
    <alternativeName>
        <fullName evidence="1">16S rRNA m(4)C1402 methyltransferase</fullName>
    </alternativeName>
    <alternativeName>
        <fullName evidence="1">rRNA (cytosine-N(4)-)-methyltransferase RsmH</fullName>
    </alternativeName>
</protein>
<evidence type="ECO:0000255" key="1">
    <source>
        <dbReference type="HAMAP-Rule" id="MF_01007"/>
    </source>
</evidence>
<feature type="chain" id="PRO_0000386939" description="Ribosomal RNA small subunit methyltransferase H">
    <location>
        <begin position="1"/>
        <end position="314"/>
    </location>
</feature>
<feature type="binding site" evidence="1">
    <location>
        <begin position="34"/>
        <end position="36"/>
    </location>
    <ligand>
        <name>S-adenosyl-L-methionine</name>
        <dbReference type="ChEBI" id="CHEBI:59789"/>
    </ligand>
</feature>
<feature type="binding site" evidence="1">
    <location>
        <position position="53"/>
    </location>
    <ligand>
        <name>S-adenosyl-L-methionine</name>
        <dbReference type="ChEBI" id="CHEBI:59789"/>
    </ligand>
</feature>
<feature type="binding site" evidence="1">
    <location>
        <position position="82"/>
    </location>
    <ligand>
        <name>S-adenosyl-L-methionine</name>
        <dbReference type="ChEBI" id="CHEBI:59789"/>
    </ligand>
</feature>
<feature type="binding site" evidence="1">
    <location>
        <position position="103"/>
    </location>
    <ligand>
        <name>S-adenosyl-L-methionine</name>
        <dbReference type="ChEBI" id="CHEBI:59789"/>
    </ligand>
</feature>
<feature type="binding site" evidence="1">
    <location>
        <position position="110"/>
    </location>
    <ligand>
        <name>S-adenosyl-L-methionine</name>
        <dbReference type="ChEBI" id="CHEBI:59789"/>
    </ligand>
</feature>
<accession>Q03QH0</accession>
<comment type="function">
    <text evidence="1">Specifically methylates the N4 position of cytidine in position 1402 (C1402) of 16S rRNA.</text>
</comment>
<comment type="catalytic activity">
    <reaction evidence="1">
        <text>cytidine(1402) in 16S rRNA + S-adenosyl-L-methionine = N(4)-methylcytidine(1402) in 16S rRNA + S-adenosyl-L-homocysteine + H(+)</text>
        <dbReference type="Rhea" id="RHEA:42928"/>
        <dbReference type="Rhea" id="RHEA-COMP:10286"/>
        <dbReference type="Rhea" id="RHEA-COMP:10287"/>
        <dbReference type="ChEBI" id="CHEBI:15378"/>
        <dbReference type="ChEBI" id="CHEBI:57856"/>
        <dbReference type="ChEBI" id="CHEBI:59789"/>
        <dbReference type="ChEBI" id="CHEBI:74506"/>
        <dbReference type="ChEBI" id="CHEBI:82748"/>
        <dbReference type="EC" id="2.1.1.199"/>
    </reaction>
</comment>
<comment type="subcellular location">
    <subcellularLocation>
        <location evidence="1">Cytoplasm</location>
    </subcellularLocation>
</comment>
<comment type="similarity">
    <text evidence="1">Belongs to the methyltransferase superfamily. RsmH family.</text>
</comment>
<reference key="1">
    <citation type="journal article" date="2006" name="Proc. Natl. Acad. Sci. U.S.A.">
        <title>Comparative genomics of the lactic acid bacteria.</title>
        <authorList>
            <person name="Makarova K.S."/>
            <person name="Slesarev A."/>
            <person name="Wolf Y.I."/>
            <person name="Sorokin A."/>
            <person name="Mirkin B."/>
            <person name="Koonin E.V."/>
            <person name="Pavlov A."/>
            <person name="Pavlova N."/>
            <person name="Karamychev V."/>
            <person name="Polouchine N."/>
            <person name="Shakhova V."/>
            <person name="Grigoriev I."/>
            <person name="Lou Y."/>
            <person name="Rohksar D."/>
            <person name="Lucas S."/>
            <person name="Huang K."/>
            <person name="Goodstein D.M."/>
            <person name="Hawkins T."/>
            <person name="Plengvidhya V."/>
            <person name="Welker D."/>
            <person name="Hughes J."/>
            <person name="Goh Y."/>
            <person name="Benson A."/>
            <person name="Baldwin K."/>
            <person name="Lee J.-H."/>
            <person name="Diaz-Muniz I."/>
            <person name="Dosti B."/>
            <person name="Smeianov V."/>
            <person name="Wechter W."/>
            <person name="Barabote R."/>
            <person name="Lorca G."/>
            <person name="Altermann E."/>
            <person name="Barrangou R."/>
            <person name="Ganesan B."/>
            <person name="Xie Y."/>
            <person name="Rawsthorne H."/>
            <person name="Tamir D."/>
            <person name="Parker C."/>
            <person name="Breidt F."/>
            <person name="Broadbent J.R."/>
            <person name="Hutkins R."/>
            <person name="O'Sullivan D."/>
            <person name="Steele J."/>
            <person name="Unlu G."/>
            <person name="Saier M.H. Jr."/>
            <person name="Klaenhammer T."/>
            <person name="Richardson P."/>
            <person name="Kozyavkin S."/>
            <person name="Weimer B.C."/>
            <person name="Mills D.A."/>
        </authorList>
    </citation>
    <scope>NUCLEOTIDE SEQUENCE [LARGE SCALE GENOMIC DNA]</scope>
    <source>
        <strain>ATCC 367 / BCRC 12310 / CIP 105137 / JCM 1170 / LMG 11437 / NCIMB 947 / NCTC 947</strain>
    </source>
</reference>
<name>RSMH_LEVBA</name>
<keyword id="KW-0963">Cytoplasm</keyword>
<keyword id="KW-0489">Methyltransferase</keyword>
<keyword id="KW-1185">Reference proteome</keyword>
<keyword id="KW-0698">rRNA processing</keyword>
<keyword id="KW-0949">S-adenosyl-L-methionine</keyword>
<keyword id="KW-0808">Transferase</keyword>
<organism>
    <name type="scientific">Levilactobacillus brevis (strain ATCC 367 / BCRC 12310 / CIP 105137 / JCM 1170 / LMG 11437 / NCIMB 947 / NCTC 947)</name>
    <name type="common">Lactobacillus brevis</name>
    <dbReference type="NCBI Taxonomy" id="387344"/>
    <lineage>
        <taxon>Bacteria</taxon>
        <taxon>Bacillati</taxon>
        <taxon>Bacillota</taxon>
        <taxon>Bacilli</taxon>
        <taxon>Lactobacillales</taxon>
        <taxon>Lactobacillaceae</taxon>
        <taxon>Levilactobacillus</taxon>
    </lineage>
</organism>
<gene>
    <name evidence="1" type="primary">rsmH</name>
    <name type="synonym">mraW</name>
    <name type="ordered locus">LVIS_1454</name>
</gene>
<dbReference type="EC" id="2.1.1.199" evidence="1"/>
<dbReference type="EMBL" id="CP000416">
    <property type="protein sequence ID" value="ABJ64552.1"/>
    <property type="molecule type" value="Genomic_DNA"/>
</dbReference>
<dbReference type="RefSeq" id="WP_011668180.1">
    <property type="nucleotide sequence ID" value="NC_008497.1"/>
</dbReference>
<dbReference type="SMR" id="Q03QH0"/>
<dbReference type="STRING" id="387344.LVIS_1454"/>
<dbReference type="KEGG" id="lbr:LVIS_1454"/>
<dbReference type="PATRIC" id="fig|387344.15.peg.1391"/>
<dbReference type="eggNOG" id="COG0275">
    <property type="taxonomic scope" value="Bacteria"/>
</dbReference>
<dbReference type="HOGENOM" id="CLU_038422_2_0_9"/>
<dbReference type="Proteomes" id="UP000001652">
    <property type="component" value="Chromosome"/>
</dbReference>
<dbReference type="GO" id="GO:0005737">
    <property type="term" value="C:cytoplasm"/>
    <property type="evidence" value="ECO:0007669"/>
    <property type="project" value="UniProtKB-SubCell"/>
</dbReference>
<dbReference type="GO" id="GO:0071424">
    <property type="term" value="F:rRNA (cytosine-N4-)-methyltransferase activity"/>
    <property type="evidence" value="ECO:0007669"/>
    <property type="project" value="UniProtKB-UniRule"/>
</dbReference>
<dbReference type="GO" id="GO:0070475">
    <property type="term" value="P:rRNA base methylation"/>
    <property type="evidence" value="ECO:0007669"/>
    <property type="project" value="UniProtKB-UniRule"/>
</dbReference>
<dbReference type="FunFam" id="1.10.150.170:FF:000001">
    <property type="entry name" value="Ribosomal RNA small subunit methyltransferase H"/>
    <property type="match status" value="1"/>
</dbReference>
<dbReference type="Gene3D" id="1.10.150.170">
    <property type="entry name" value="Putative methyltransferase TM0872, insert domain"/>
    <property type="match status" value="1"/>
</dbReference>
<dbReference type="Gene3D" id="3.40.50.150">
    <property type="entry name" value="Vaccinia Virus protein VP39"/>
    <property type="match status" value="1"/>
</dbReference>
<dbReference type="HAMAP" id="MF_01007">
    <property type="entry name" value="16SrRNA_methyltr_H"/>
    <property type="match status" value="1"/>
</dbReference>
<dbReference type="InterPro" id="IPR002903">
    <property type="entry name" value="RsmH"/>
</dbReference>
<dbReference type="InterPro" id="IPR023397">
    <property type="entry name" value="SAM-dep_MeTrfase_MraW_recog"/>
</dbReference>
<dbReference type="InterPro" id="IPR029063">
    <property type="entry name" value="SAM-dependent_MTases_sf"/>
</dbReference>
<dbReference type="NCBIfam" id="TIGR00006">
    <property type="entry name" value="16S rRNA (cytosine(1402)-N(4))-methyltransferase RsmH"/>
    <property type="match status" value="1"/>
</dbReference>
<dbReference type="PANTHER" id="PTHR11265:SF0">
    <property type="entry name" value="12S RRNA N4-METHYLCYTIDINE METHYLTRANSFERASE"/>
    <property type="match status" value="1"/>
</dbReference>
<dbReference type="PANTHER" id="PTHR11265">
    <property type="entry name" value="S-ADENOSYL-METHYLTRANSFERASE MRAW"/>
    <property type="match status" value="1"/>
</dbReference>
<dbReference type="Pfam" id="PF01795">
    <property type="entry name" value="Methyltransf_5"/>
    <property type="match status" value="1"/>
</dbReference>
<dbReference type="PIRSF" id="PIRSF004486">
    <property type="entry name" value="MraW"/>
    <property type="match status" value="1"/>
</dbReference>
<dbReference type="SUPFAM" id="SSF81799">
    <property type="entry name" value="Putative methyltransferase TM0872, insert domain"/>
    <property type="match status" value="1"/>
</dbReference>
<dbReference type="SUPFAM" id="SSF53335">
    <property type="entry name" value="S-adenosyl-L-methionine-dependent methyltransferases"/>
    <property type="match status" value="1"/>
</dbReference>